<feature type="chain" id="PRO_0000288195" description="tRNA (guanine-N(7)-)-methyltransferase">
    <location>
        <begin position="1"/>
        <end position="212"/>
    </location>
</feature>
<feature type="region of interest" description="Interaction with RNA" evidence="2">
    <location>
        <begin position="124"/>
        <end position="129"/>
    </location>
</feature>
<feature type="active site" evidence="1">
    <location>
        <position position="118"/>
    </location>
</feature>
<feature type="binding site" evidence="2">
    <location>
        <position position="44"/>
    </location>
    <ligand>
        <name>S-adenosyl-L-methionine</name>
        <dbReference type="ChEBI" id="CHEBI:59789"/>
    </ligand>
</feature>
<feature type="binding site" evidence="2">
    <location>
        <position position="69"/>
    </location>
    <ligand>
        <name>S-adenosyl-L-methionine</name>
        <dbReference type="ChEBI" id="CHEBI:59789"/>
    </ligand>
</feature>
<feature type="binding site" evidence="2">
    <location>
        <position position="96"/>
    </location>
    <ligand>
        <name>S-adenosyl-L-methionine</name>
        <dbReference type="ChEBI" id="CHEBI:59789"/>
    </ligand>
</feature>
<feature type="binding site" evidence="2">
    <location>
        <position position="118"/>
    </location>
    <ligand>
        <name>S-adenosyl-L-methionine</name>
        <dbReference type="ChEBI" id="CHEBI:59789"/>
    </ligand>
</feature>
<feature type="binding site" evidence="2">
    <location>
        <position position="122"/>
    </location>
    <ligand>
        <name>substrate</name>
    </ligand>
</feature>
<feature type="binding site" evidence="2">
    <location>
        <position position="154"/>
    </location>
    <ligand>
        <name>substrate</name>
    </ligand>
</feature>
<feature type="binding site" evidence="2">
    <location>
        <begin position="192"/>
        <end position="195"/>
    </location>
    <ligand>
        <name>substrate</name>
    </ligand>
</feature>
<dbReference type="EC" id="2.1.1.33" evidence="2"/>
<dbReference type="EMBL" id="CP000422">
    <property type="protein sequence ID" value="ABJ67743.1"/>
    <property type="molecule type" value="Genomic_DNA"/>
</dbReference>
<dbReference type="RefSeq" id="WP_011673202.1">
    <property type="nucleotide sequence ID" value="NC_008525.1"/>
</dbReference>
<dbReference type="SMR" id="Q03GC9"/>
<dbReference type="STRING" id="278197.PEPE_0682"/>
<dbReference type="GeneID" id="33062656"/>
<dbReference type="KEGG" id="ppe:PEPE_0682"/>
<dbReference type="eggNOG" id="COG0220">
    <property type="taxonomic scope" value="Bacteria"/>
</dbReference>
<dbReference type="HOGENOM" id="CLU_050910_2_1_9"/>
<dbReference type="OrthoDB" id="9802090at2"/>
<dbReference type="UniPathway" id="UPA00989"/>
<dbReference type="Proteomes" id="UP000000773">
    <property type="component" value="Chromosome"/>
</dbReference>
<dbReference type="GO" id="GO:0043527">
    <property type="term" value="C:tRNA methyltransferase complex"/>
    <property type="evidence" value="ECO:0007669"/>
    <property type="project" value="TreeGrafter"/>
</dbReference>
<dbReference type="GO" id="GO:0008176">
    <property type="term" value="F:tRNA (guanine(46)-N7)-methyltransferase activity"/>
    <property type="evidence" value="ECO:0007669"/>
    <property type="project" value="UniProtKB-UniRule"/>
</dbReference>
<dbReference type="FunFam" id="3.40.50.150:FF:000035">
    <property type="entry name" value="tRNA (guanine-N(7)-)-methyltransferase"/>
    <property type="match status" value="1"/>
</dbReference>
<dbReference type="Gene3D" id="3.40.50.150">
    <property type="entry name" value="Vaccinia Virus protein VP39"/>
    <property type="match status" value="1"/>
</dbReference>
<dbReference type="HAMAP" id="MF_01057">
    <property type="entry name" value="tRNA_methyltr_TrmB"/>
    <property type="match status" value="1"/>
</dbReference>
<dbReference type="InterPro" id="IPR029063">
    <property type="entry name" value="SAM-dependent_MTases_sf"/>
</dbReference>
<dbReference type="InterPro" id="IPR003358">
    <property type="entry name" value="tRNA_(Gua-N-7)_MeTrfase_Trmb"/>
</dbReference>
<dbReference type="InterPro" id="IPR055361">
    <property type="entry name" value="tRNA_methyltr_TrmB_bact"/>
</dbReference>
<dbReference type="NCBIfam" id="NF001080">
    <property type="entry name" value="PRK00121.2-2"/>
    <property type="match status" value="1"/>
</dbReference>
<dbReference type="NCBIfam" id="TIGR00091">
    <property type="entry name" value="tRNA (guanosine(46)-N7)-methyltransferase TrmB"/>
    <property type="match status" value="1"/>
</dbReference>
<dbReference type="PANTHER" id="PTHR23417">
    <property type="entry name" value="3-DEOXY-D-MANNO-OCTULOSONIC-ACID TRANSFERASE/TRNA GUANINE-N 7 - -METHYLTRANSFERASE"/>
    <property type="match status" value="1"/>
</dbReference>
<dbReference type="PANTHER" id="PTHR23417:SF14">
    <property type="entry name" value="PENTACOTRIPEPTIDE-REPEAT REGION OF PRORP DOMAIN-CONTAINING PROTEIN"/>
    <property type="match status" value="1"/>
</dbReference>
<dbReference type="Pfam" id="PF02390">
    <property type="entry name" value="Methyltransf_4"/>
    <property type="match status" value="1"/>
</dbReference>
<dbReference type="SUPFAM" id="SSF53335">
    <property type="entry name" value="S-adenosyl-L-methionine-dependent methyltransferases"/>
    <property type="match status" value="1"/>
</dbReference>
<dbReference type="PROSITE" id="PS51625">
    <property type="entry name" value="SAM_MT_TRMB"/>
    <property type="match status" value="1"/>
</dbReference>
<proteinExistence type="inferred from homology"/>
<accession>Q03GC9</accession>
<gene>
    <name evidence="2" type="primary">trmB</name>
    <name type="ordered locus">PEPE_0682</name>
</gene>
<organism>
    <name type="scientific">Pediococcus pentosaceus (strain ATCC 25745 / CCUG 21536 / LMG 10740 / 183-1w)</name>
    <dbReference type="NCBI Taxonomy" id="278197"/>
    <lineage>
        <taxon>Bacteria</taxon>
        <taxon>Bacillati</taxon>
        <taxon>Bacillota</taxon>
        <taxon>Bacilli</taxon>
        <taxon>Lactobacillales</taxon>
        <taxon>Lactobacillaceae</taxon>
        <taxon>Pediococcus</taxon>
    </lineage>
</organism>
<comment type="function">
    <text evidence="2">Catalyzes the formation of N(7)-methylguanine at position 46 (m7G46) in tRNA.</text>
</comment>
<comment type="catalytic activity">
    <reaction evidence="2">
        <text>guanosine(46) in tRNA + S-adenosyl-L-methionine = N(7)-methylguanosine(46) in tRNA + S-adenosyl-L-homocysteine</text>
        <dbReference type="Rhea" id="RHEA:42708"/>
        <dbReference type="Rhea" id="RHEA-COMP:10188"/>
        <dbReference type="Rhea" id="RHEA-COMP:10189"/>
        <dbReference type="ChEBI" id="CHEBI:57856"/>
        <dbReference type="ChEBI" id="CHEBI:59789"/>
        <dbReference type="ChEBI" id="CHEBI:74269"/>
        <dbReference type="ChEBI" id="CHEBI:74480"/>
        <dbReference type="EC" id="2.1.1.33"/>
    </reaction>
</comment>
<comment type="pathway">
    <text evidence="2">tRNA modification; N(7)-methylguanine-tRNA biosynthesis.</text>
</comment>
<comment type="similarity">
    <text evidence="2">Belongs to the class I-like SAM-binding methyltransferase superfamily. TrmB family.</text>
</comment>
<protein>
    <recommendedName>
        <fullName evidence="2">tRNA (guanine-N(7)-)-methyltransferase</fullName>
        <ecNumber evidence="2">2.1.1.33</ecNumber>
    </recommendedName>
    <alternativeName>
        <fullName evidence="2">tRNA (guanine(46)-N(7))-methyltransferase</fullName>
    </alternativeName>
    <alternativeName>
        <fullName evidence="2">tRNA(m7G46)-methyltransferase</fullName>
    </alternativeName>
</protein>
<name>TRMB_PEDPA</name>
<evidence type="ECO:0000250" key="1"/>
<evidence type="ECO:0000255" key="2">
    <source>
        <dbReference type="HAMAP-Rule" id="MF_01057"/>
    </source>
</evidence>
<keyword id="KW-0489">Methyltransferase</keyword>
<keyword id="KW-0949">S-adenosyl-L-methionine</keyword>
<keyword id="KW-0808">Transferase</keyword>
<keyword id="KW-0819">tRNA processing</keyword>
<reference key="1">
    <citation type="journal article" date="2006" name="Proc. Natl. Acad. Sci. U.S.A.">
        <title>Comparative genomics of the lactic acid bacteria.</title>
        <authorList>
            <person name="Makarova K.S."/>
            <person name="Slesarev A."/>
            <person name="Wolf Y.I."/>
            <person name="Sorokin A."/>
            <person name="Mirkin B."/>
            <person name="Koonin E.V."/>
            <person name="Pavlov A."/>
            <person name="Pavlova N."/>
            <person name="Karamychev V."/>
            <person name="Polouchine N."/>
            <person name="Shakhova V."/>
            <person name="Grigoriev I."/>
            <person name="Lou Y."/>
            <person name="Rohksar D."/>
            <person name="Lucas S."/>
            <person name="Huang K."/>
            <person name="Goodstein D.M."/>
            <person name="Hawkins T."/>
            <person name="Plengvidhya V."/>
            <person name="Welker D."/>
            <person name="Hughes J."/>
            <person name="Goh Y."/>
            <person name="Benson A."/>
            <person name="Baldwin K."/>
            <person name="Lee J.-H."/>
            <person name="Diaz-Muniz I."/>
            <person name="Dosti B."/>
            <person name="Smeianov V."/>
            <person name="Wechter W."/>
            <person name="Barabote R."/>
            <person name="Lorca G."/>
            <person name="Altermann E."/>
            <person name="Barrangou R."/>
            <person name="Ganesan B."/>
            <person name="Xie Y."/>
            <person name="Rawsthorne H."/>
            <person name="Tamir D."/>
            <person name="Parker C."/>
            <person name="Breidt F."/>
            <person name="Broadbent J.R."/>
            <person name="Hutkins R."/>
            <person name="O'Sullivan D."/>
            <person name="Steele J."/>
            <person name="Unlu G."/>
            <person name="Saier M.H. Jr."/>
            <person name="Klaenhammer T."/>
            <person name="Richardson P."/>
            <person name="Kozyavkin S."/>
            <person name="Weimer B.C."/>
            <person name="Mills D.A."/>
        </authorList>
    </citation>
    <scope>NUCLEOTIDE SEQUENCE [LARGE SCALE GENOMIC DNA]</scope>
    <source>
        <strain>ATCC 25745 / CCUG 21536 / LMG 10740 / 183-1w</strain>
    </source>
</reference>
<sequence>MRVRNKPWAPELIEAHPEKIVEKGQAFKGQWNQRFEKEQPIFIEVGTGKGQFIINMAKKYPQYNFIGIEIQKTVIAIALKNALEEEIPNLQFLYADGAELTDYFEDGEVSKVFLNFSDPWPKTRHEKRRLTFKTFLKVYEQILVKNGEVEFKTDNQGLFEYSLYSLNNYGMTFEGVWLDLHNSEENEDNVETEYEHKFSAKGQPIYKLKAHF</sequence>